<proteinExistence type="evidence at protein level"/>
<feature type="signal peptide" evidence="3">
    <location>
        <begin position="1"/>
        <end position="26"/>
    </location>
</feature>
<feature type="chain" id="PRO_0000003998" description="Protocadherin-15">
    <location>
        <begin position="27"/>
        <end position="1955"/>
    </location>
</feature>
<feature type="topological domain" description="Extracellular" evidence="3">
    <location>
        <begin position="27"/>
        <end position="1376"/>
    </location>
</feature>
<feature type="transmembrane region" description="Helical" evidence="3">
    <location>
        <begin position="1377"/>
        <end position="1397"/>
    </location>
</feature>
<feature type="topological domain" description="Cytoplasmic" evidence="3">
    <location>
        <begin position="1398"/>
        <end position="1955"/>
    </location>
</feature>
<feature type="domain" description="Cadherin 1" evidence="4">
    <location>
        <begin position="40"/>
        <end position="147"/>
    </location>
</feature>
<feature type="domain" description="Cadherin 2" evidence="4">
    <location>
        <begin position="148"/>
        <end position="265"/>
    </location>
</feature>
<feature type="domain" description="Cadherin 3" evidence="4">
    <location>
        <begin position="278"/>
        <end position="395"/>
    </location>
</feature>
<feature type="domain" description="Cadherin 4" evidence="4">
    <location>
        <begin position="396"/>
        <end position="509"/>
    </location>
</feature>
<feature type="domain" description="Cadherin 5" evidence="4">
    <location>
        <begin position="510"/>
        <end position="616"/>
    </location>
</feature>
<feature type="domain" description="Cadherin 6" evidence="4">
    <location>
        <begin position="617"/>
        <end position="717"/>
    </location>
</feature>
<feature type="domain" description="Cadherin 7" evidence="4">
    <location>
        <begin position="719"/>
        <end position="819"/>
    </location>
</feature>
<feature type="domain" description="Cadherin 8" evidence="4">
    <location>
        <begin position="820"/>
        <end position="926"/>
    </location>
</feature>
<feature type="domain" description="Cadherin 9" evidence="4">
    <location>
        <begin position="927"/>
        <end position="1035"/>
    </location>
</feature>
<feature type="domain" description="Cadherin 10" evidence="4">
    <location>
        <begin position="1037"/>
        <end position="1144"/>
    </location>
</feature>
<feature type="domain" description="Cadherin 11" evidence="4">
    <location>
        <begin position="1145"/>
        <end position="1259"/>
    </location>
</feature>
<feature type="region of interest" description="Disordered" evidence="5">
    <location>
        <begin position="1426"/>
        <end position="1446"/>
    </location>
</feature>
<feature type="region of interest" description="Disordered" evidence="5">
    <location>
        <begin position="1601"/>
        <end position="1623"/>
    </location>
</feature>
<feature type="region of interest" description="Disordered" evidence="5">
    <location>
        <begin position="1745"/>
        <end position="1766"/>
    </location>
</feature>
<feature type="region of interest" description="Disordered" evidence="5">
    <location>
        <begin position="1928"/>
        <end position="1955"/>
    </location>
</feature>
<feature type="compositionally biased region" description="Pro residues" evidence="5">
    <location>
        <begin position="1426"/>
        <end position="1444"/>
    </location>
</feature>
<feature type="compositionally biased region" description="Polar residues" evidence="5">
    <location>
        <begin position="1928"/>
        <end position="1941"/>
    </location>
</feature>
<feature type="glycosylation site" description="N-linked (GlcNAc...) asparagine" evidence="3">
    <location>
        <position position="52"/>
    </location>
</feature>
<feature type="glycosylation site" description="N-linked (GlcNAc...) asparagine" evidence="3">
    <location>
        <position position="97"/>
    </location>
</feature>
<feature type="glycosylation site" description="N-linked (GlcNAc...) asparagine" evidence="3">
    <location>
        <position position="201"/>
    </location>
</feature>
<feature type="glycosylation site" description="N-linked (GlcNAc...) asparagine" evidence="3">
    <location>
        <position position="419"/>
    </location>
</feature>
<feature type="glycosylation site" description="N-linked (GlcNAc...) asparagine" evidence="3">
    <location>
        <position position="559"/>
    </location>
</feature>
<feature type="glycosylation site" description="N-linked (GlcNAc...) asparagine" evidence="3">
    <location>
        <position position="662"/>
    </location>
</feature>
<feature type="glycosylation site" description="N-linked (GlcNAc...) asparagine" evidence="3">
    <location>
        <position position="724"/>
    </location>
</feature>
<feature type="glycosylation site" description="N-linked (GlcNAc...) asparagine" evidence="3">
    <location>
        <position position="768"/>
    </location>
</feature>
<feature type="glycosylation site" description="N-linked (GlcNAc...) asparagine" evidence="3">
    <location>
        <position position="821"/>
    </location>
</feature>
<feature type="glycosylation site" description="N-linked (GlcNAc...) asparagine" evidence="3">
    <location>
        <position position="851"/>
    </location>
</feature>
<feature type="glycosylation site" description="N-linked (GlcNAc...) asparagine" evidence="3">
    <location>
        <position position="1064"/>
    </location>
</feature>
<feature type="glycosylation site" description="N-linked (GlcNAc...) asparagine" evidence="3">
    <location>
        <position position="1084"/>
    </location>
</feature>
<feature type="glycosylation site" description="N-linked (GlcNAc...) asparagine" evidence="3">
    <location>
        <position position="1175"/>
    </location>
</feature>
<feature type="disulfide bond" evidence="1">
    <location>
        <begin position="32"/>
        <end position="120"/>
    </location>
</feature>
<feature type="splice variant" id="VSP_028257" description="In isoform 2." evidence="15">
    <location>
        <begin position="1"/>
        <end position="1118"/>
    </location>
</feature>
<feature type="splice variant" id="VSP_046616" description="In isoform 4." evidence="17">
    <original>D</original>
    <variation>DVPPSGVP</variation>
    <location>
        <position position="435"/>
    </location>
</feature>
<feature type="splice variant" id="VSP_028259" description="In isoform 3." evidence="16">
    <original>GLPAS</original>
    <variation>VSRRH</variation>
    <location>
        <begin position="957"/>
        <end position="961"/>
    </location>
</feature>
<feature type="splice variant" id="VSP_028260" description="In isoform 3." evidence="16">
    <location>
        <begin position="962"/>
        <end position="1955"/>
    </location>
</feature>
<feature type="splice variant" id="VSP_028258" description="In isoform 2." evidence="15">
    <original>LRVPSKS</original>
    <variation>MTFSHSG</variation>
    <location>
        <begin position="1119"/>
        <end position="1125"/>
    </location>
</feature>
<feature type="splice variant" id="VSP_046617" description="In isoform 4." evidence="17">
    <original>ILFLLYHFQQSRGNNSVSEDRKHQQVVMPFSSNTIEAHKSAHVDGSLKSNKLKSARKFTFLSDEDDLSAHNPLYKENISQVSTNSDISQRTDFVDPFSPKIQAKSKSLRGPREKIQRLWSQSVSLPRRLMRKVPNRPEIIDLQQWQGTRQKAENENTGICTNKRGSSNPLLTTEEANLTEKEEIRQGETLMIEGTEQLKSLSSDSSFCFPRPHFSFSTLPTVSRTVELKSEPNVISSPAECSLELSPSRPCVLHSSLSRRETPICMLPIETERNIFENFAHPPNISPSACPLPPPPPISPPSPPPAPAPLAPPPDISPFSL</original>
    <variation>MYEMPQYGSRRRLLPPAGQEEYGEVVGEAEEEYEEEEEEPKKIKKPKVEIREPSEEEEVVVTIEKPPAAEPTYTTWKRARIFPMIFKKVRGLADKRGIVDLEGEEWQRRLEEEDKDYLKLTLDQEEATESTVESEEESSSDYTEYSEEESEFSESETTEEESESETPSEEEESSTPESEESESTESEGEKARKNIVLARRRPMVEEVKEVKGRKEEPQEEQKEPKMEEEEHSEEEESGPAPVEESTDPEAQDIPEEGSAESASVEGGVESEEESESGSSSSSSESQSGGPWGYQVPAYDRSKNANQKKSPGANSEGYNTAL</variation>
    <location>
        <begin position="1456"/>
        <end position="1776"/>
    </location>
</feature>
<feature type="splice variant" id="VSP_046618" description="In isoform 5." evidence="17">
    <original>ILFLLYHFQQSRGNNSVSEDRKHQQVVMPFSSNTIEAHKSAHVDGSLKSNKLKSARKFTFLSDEDDLSAHNPLYKENISQVSTNSDISQRTDFVDPFSPKIQAKSKSLRGPREKIQRLWSQSVSLPRRLMRKVPNRPEIIDLQQWQGTRQKAENENTGICTNKRGSSNPLLTTEEANLTEKEEIRQGETLMIEGTEQLKSLSSDSSFCFPRPHFSFSTLP</original>
    <variation>MYEMPQYGSRRRLLPPAGQEEYGEVVGEAEEEYEEEEWARKRMIKLVVDREYETSSTGEDSAPECQRNRLHHPSIHSNINGNIYIAQNGSVVRTRRACLTDNLKVASPVRLGGPFKKLDKLAVTHEENVPLNTLSKGPFSTEKMNARPTLVTFAPCPVGTDNTAVKPLRNRLKSTVEQESMIDSKNIKEALEFHSDHTQSDDEELWMGPWNNLHIPMTKL</variation>
    <location>
        <begin position="1456"/>
        <end position="1675"/>
    </location>
</feature>
<feature type="splice variant" id="VSP_062482" description="In isoform 7.">
    <original>LFLLYHFQQSRGNNSVSEDRKHQQVVMPFSSNTIEAHKSAHVDGSLKSNKLKSARKFTFLSDEDDLSAHNPLYKENISQVSTNSDISQRTDFVDPFSPKIQAKSKSLRGPREKIQRLWSQSVSLPRRLMRKVPNRPEIIDLQQWQGTRQKAENENTGICTNKRGSSNPLLTTEEANLTEKEEIRQGETLMIEGTEQLKSLSSDSSFCFPRPHFSFSTLPTVSRTVELKSEPNVISSPAECSLELSPSRPCVLHSSLSRRETPICMLPIETERNIFENFAHPPNI</original>
    <variation>WSFCWQLVICMRTCAIWRTLTRRGYGSEQQQLLRPSLLKPEELSMESGIDPGQEYGQDYYSYEHGYEMPQYGSRRRLLPPAGQEEYGEVVGEAEEEYEEEEWARKRMIKLVVDREYETSSTGEDSAPECQRNRLHHPSIHSNINGNIYIAQNGSVVRTRRACLTDNLKVASPVRLGGPFKKLDKLAVTHEENVPLNTLSKGPFSTEKMNARPTLVTFAPCPVGTDNTAVKPLRNRLKSTVEQESMIDSKNIKEALEFHSDHTQSDDEELWMGPWNNLHIPMTKL</variation>
    <location>
        <begin position="1457"/>
        <end position="1740"/>
    </location>
</feature>
<feature type="splice variant" id="VSP_046621" description="In isoform 5." evidence="17">
    <location>
        <begin position="1676"/>
        <end position="1955"/>
    </location>
</feature>
<feature type="splice variant" id="VSP_062483" description="In isoform 7.">
    <location>
        <begin position="1741"/>
        <end position="1955"/>
    </location>
</feature>
<feature type="splice variant" id="VSP_046622" description="In isoform 4." evidence="17">
    <location>
        <begin position="1777"/>
        <end position="1955"/>
    </location>
</feature>
<feature type="sequence variant" id="VAR_028289" description="In dbSNP:rs11004439." evidence="10 13">
    <original>S</original>
    <variation>A</variation>
    <location>
        <position position="19"/>
    </location>
</feature>
<feature type="sequence variant" id="VAR_024035" description="In DFNB23; dbSNP:rs137853003." evidence="7 12">
    <original>R</original>
    <variation>G</variation>
    <location>
        <position position="134"/>
    </location>
</feature>
<feature type="sequence variant" id="VAR_071696" description="In USH1F; dbSNP:rs767966376." evidence="13">
    <original>R</original>
    <variation>Q</variation>
    <location>
        <position position="134"/>
    </location>
</feature>
<feature type="sequence variant" id="VAR_071697" description="In dbSNP:rs145037203." evidence="13">
    <original>N</original>
    <variation>S</variation>
    <location>
        <position position="174"/>
    </location>
</feature>
<feature type="sequence variant" id="VAR_069297" description="In USH1DF." evidence="12">
    <original>D</original>
    <variation>G</variation>
    <location>
        <position position="178"/>
    </location>
</feature>
<feature type="sequence variant" id="VAR_024036" description="In DFNB23; dbSNP:rs137853002." evidence="7">
    <original>G</original>
    <variation>D</variation>
    <location>
        <position position="262"/>
    </location>
</feature>
<feature type="sequence variant" id="VAR_028290" description="In dbSNP:rs10825269." evidence="13">
    <original>G</original>
    <variation>S</variation>
    <location>
        <position position="380"/>
    </location>
</feature>
<feature type="sequence variant" id="VAR_028291" description="In dbSNP:rs4935502." evidence="11 13">
    <original>D</original>
    <variation>A</variation>
    <location>
        <position position="435"/>
    </location>
</feature>
<feature type="sequence variant" id="VAR_028292" description="In dbSNP:rs2135720." evidence="6 11 13">
    <original>R</original>
    <variation>Q</variation>
    <location>
        <position position="929"/>
    </location>
</feature>
<feature type="sequence variant" id="VAR_071698" description="In dbSNP:rs111033363." evidence="13">
    <original>R</original>
    <variation>S</variation>
    <location>
        <position position="1273"/>
    </location>
</feature>
<feature type="sequence variant" id="VAR_024037" description="In USH1F; benign; dbSNP:rs61731387." evidence="9">
    <original>Q</original>
    <variation>K</variation>
    <location>
        <position position="1342"/>
    </location>
</feature>
<feature type="sequence variant" id="VAR_079507" description="In DFNB23." evidence="14">
    <location>
        <begin position="1576"/>
        <end position="1955"/>
    </location>
</feature>
<feature type="sequence variant" id="VAR_024038" description="In USH1F." evidence="9">
    <location>
        <position position="1867"/>
    </location>
</feature>
<feature type="sequence conflict" description="In Ref. 1; AAK31581." evidence="18" ref="1">
    <original>L</original>
    <variation>S</variation>
    <location>
        <position position="261"/>
    </location>
</feature>
<feature type="sequence conflict" description="In Ref. 1; AAK31581." evidence="18" ref="1">
    <original>Q</original>
    <variation>L</variation>
    <location>
        <position position="467"/>
    </location>
</feature>
<feature type="sequence conflict" description="In Ref. 1; AAK31581." evidence="18" ref="1">
    <original>Q</original>
    <variation>R</variation>
    <location>
        <position position="1276"/>
    </location>
</feature>
<feature type="strand" evidence="25">
    <location>
        <begin position="36"/>
        <end position="38"/>
    </location>
</feature>
<feature type="strand" evidence="25">
    <location>
        <begin position="40"/>
        <end position="47"/>
    </location>
</feature>
<feature type="strand" evidence="25">
    <location>
        <begin position="55"/>
        <end position="58"/>
    </location>
</feature>
<feature type="strand" evidence="24">
    <location>
        <begin position="62"/>
        <end position="64"/>
    </location>
</feature>
<feature type="strand" evidence="25">
    <location>
        <begin position="66"/>
        <end position="70"/>
    </location>
</feature>
<feature type="strand" evidence="25">
    <location>
        <begin position="73"/>
        <end position="79"/>
    </location>
</feature>
<feature type="helix" evidence="25">
    <location>
        <begin position="81"/>
        <end position="83"/>
    </location>
</feature>
<feature type="strand" evidence="25">
    <location>
        <begin position="85"/>
        <end position="88"/>
    </location>
</feature>
<feature type="turn" evidence="25">
    <location>
        <begin position="89"/>
        <end position="92"/>
    </location>
</feature>
<feature type="strand" evidence="25">
    <location>
        <begin position="93"/>
        <end position="96"/>
    </location>
</feature>
<feature type="turn" evidence="25">
    <location>
        <begin position="107"/>
        <end position="109"/>
    </location>
</feature>
<feature type="strand" evidence="25">
    <location>
        <begin position="113"/>
        <end position="122"/>
    </location>
</feature>
<feature type="turn" evidence="25">
    <location>
        <begin position="123"/>
        <end position="125"/>
    </location>
</feature>
<feature type="strand" evidence="25">
    <location>
        <begin position="128"/>
        <end position="138"/>
    </location>
</feature>
<feature type="strand" evidence="23">
    <location>
        <begin position="146"/>
        <end position="150"/>
    </location>
</feature>
<feature type="strand" evidence="23">
    <location>
        <begin position="152"/>
        <end position="157"/>
    </location>
</feature>
<feature type="strand" evidence="23">
    <location>
        <begin position="165"/>
        <end position="167"/>
    </location>
</feature>
<feature type="turn" evidence="23">
    <location>
        <begin position="169"/>
        <end position="174"/>
    </location>
</feature>
<feature type="strand" evidence="23">
    <location>
        <begin position="175"/>
        <end position="177"/>
    </location>
</feature>
<feature type="helix" evidence="25">
    <location>
        <begin position="182"/>
        <end position="185"/>
    </location>
</feature>
<feature type="strand" evidence="23">
    <location>
        <begin position="187"/>
        <end position="192"/>
    </location>
</feature>
<feature type="helix" evidence="23">
    <location>
        <begin position="200"/>
        <end position="203"/>
    </location>
</feature>
<feature type="turn" evidence="23">
    <location>
        <begin position="209"/>
        <end position="211"/>
    </location>
</feature>
<feature type="strand" evidence="23">
    <location>
        <begin position="214"/>
        <end position="216"/>
    </location>
</feature>
<feature type="turn" evidence="23">
    <location>
        <begin position="222"/>
        <end position="224"/>
    </location>
</feature>
<feature type="strand" evidence="23">
    <location>
        <begin position="227"/>
        <end position="236"/>
    </location>
</feature>
<feature type="strand" evidence="21">
    <location>
        <begin position="241"/>
        <end position="243"/>
    </location>
</feature>
<feature type="strand" evidence="23">
    <location>
        <begin position="247"/>
        <end position="257"/>
    </location>
</feature>
<feature type="strand" evidence="20">
    <location>
        <begin position="264"/>
        <end position="266"/>
    </location>
</feature>
<feature type="strand" evidence="20">
    <location>
        <begin position="281"/>
        <end position="287"/>
    </location>
</feature>
<feature type="helix" evidence="20">
    <location>
        <begin position="292"/>
        <end position="295"/>
    </location>
</feature>
<feature type="strand" evidence="23">
    <location>
        <begin position="300"/>
        <end position="302"/>
    </location>
</feature>
<feature type="strand" evidence="22">
    <location>
        <begin position="305"/>
        <end position="307"/>
    </location>
</feature>
<feature type="strand" evidence="20">
    <location>
        <begin position="309"/>
        <end position="311"/>
    </location>
</feature>
<feature type="strand" evidence="23">
    <location>
        <begin position="313"/>
        <end position="315"/>
    </location>
</feature>
<feature type="helix" evidence="23">
    <location>
        <begin position="316"/>
        <end position="318"/>
    </location>
</feature>
<feature type="strand" evidence="20">
    <location>
        <begin position="322"/>
        <end position="331"/>
    </location>
</feature>
<feature type="helix" evidence="20">
    <location>
        <begin position="334"/>
        <end position="337"/>
    </location>
</feature>
<feature type="strand" evidence="20">
    <location>
        <begin position="338"/>
        <end position="340"/>
    </location>
</feature>
<feature type="turn" evidence="20">
    <location>
        <begin position="342"/>
        <end position="344"/>
    </location>
</feature>
<feature type="strand" evidence="20">
    <location>
        <begin position="347"/>
        <end position="349"/>
    </location>
</feature>
<feature type="turn" evidence="20">
    <location>
        <begin position="355"/>
        <end position="357"/>
    </location>
</feature>
<feature type="strand" evidence="20">
    <location>
        <begin position="360"/>
        <end position="372"/>
    </location>
</feature>
<feature type="strand" evidence="20">
    <location>
        <begin position="377"/>
        <end position="386"/>
    </location>
</feature>
<feature type="strand" evidence="20">
    <location>
        <begin position="394"/>
        <end position="405"/>
    </location>
</feature>
<feature type="strand" evidence="20">
    <location>
        <begin position="415"/>
        <end position="417"/>
    </location>
</feature>
<feature type="strand" evidence="20">
    <location>
        <begin position="426"/>
        <end position="429"/>
    </location>
</feature>
<feature type="turn" evidence="22">
    <location>
        <begin position="431"/>
        <end position="433"/>
    </location>
</feature>
<feature type="strand" evidence="20">
    <location>
        <begin position="442"/>
        <end position="447"/>
    </location>
</feature>
<feature type="turn" evidence="20">
    <location>
        <begin position="449"/>
        <end position="451"/>
    </location>
</feature>
<feature type="strand" evidence="20">
    <location>
        <begin position="452"/>
        <end position="454"/>
    </location>
</feature>
<feature type="strand" evidence="20">
    <location>
        <begin position="456"/>
        <end position="461"/>
    </location>
</feature>
<feature type="strand" evidence="20">
    <location>
        <begin position="463"/>
        <end position="467"/>
    </location>
</feature>
<feature type="turn" evidence="20">
    <location>
        <begin position="471"/>
        <end position="473"/>
    </location>
</feature>
<feature type="strand" evidence="20">
    <location>
        <begin position="476"/>
        <end position="484"/>
    </location>
</feature>
<feature type="strand" evidence="20">
    <location>
        <begin position="493"/>
        <end position="500"/>
    </location>
</feature>
<feature type="strand" evidence="20">
    <location>
        <begin position="512"/>
        <end position="519"/>
    </location>
</feature>
<feature type="strand" evidence="20">
    <location>
        <begin position="527"/>
        <end position="530"/>
    </location>
</feature>
<feature type="helix" evidence="20">
    <location>
        <begin position="539"/>
        <end position="541"/>
    </location>
</feature>
<feature type="strand" evidence="20">
    <location>
        <begin position="544"/>
        <end position="550"/>
    </location>
</feature>
<feature type="strand" evidence="20">
    <location>
        <begin position="555"/>
        <end position="558"/>
    </location>
</feature>
<feature type="turn" evidence="20">
    <location>
        <begin position="560"/>
        <end position="562"/>
    </location>
</feature>
<feature type="strand" evidence="20">
    <location>
        <begin position="564"/>
        <end position="567"/>
    </location>
</feature>
<feature type="strand" evidence="20">
    <location>
        <begin position="578"/>
        <end position="587"/>
    </location>
</feature>
<feature type="turn" evidence="20">
    <location>
        <begin position="591"/>
        <end position="593"/>
    </location>
</feature>
<feature type="strand" evidence="20">
    <location>
        <begin position="596"/>
        <end position="606"/>
    </location>
</feature>
<feature type="strand" evidence="19">
    <location>
        <begin position="818"/>
        <end position="829"/>
    </location>
</feature>
<feature type="strand" evidence="19">
    <location>
        <begin position="837"/>
        <end position="840"/>
    </location>
</feature>
<feature type="turn" evidence="19">
    <location>
        <begin position="846"/>
        <end position="848"/>
    </location>
</feature>
<feature type="strand" evidence="19">
    <location>
        <begin position="853"/>
        <end position="856"/>
    </location>
</feature>
<feature type="helix" evidence="19">
    <location>
        <begin position="859"/>
        <end position="861"/>
    </location>
</feature>
<feature type="turn" evidence="19">
    <location>
        <begin position="862"/>
        <end position="864"/>
    </location>
</feature>
<feature type="strand" evidence="19">
    <location>
        <begin position="865"/>
        <end position="867"/>
    </location>
</feature>
<feature type="turn" evidence="19">
    <location>
        <begin position="869"/>
        <end position="871"/>
    </location>
</feature>
<feature type="strand" evidence="19">
    <location>
        <begin position="873"/>
        <end position="878"/>
    </location>
</feature>
<feature type="helix" evidence="19">
    <location>
        <begin position="882"/>
        <end position="884"/>
    </location>
</feature>
<feature type="strand" evidence="19">
    <location>
        <begin position="891"/>
        <end position="899"/>
    </location>
</feature>
<feature type="strand" evidence="19">
    <location>
        <begin position="908"/>
        <end position="917"/>
    </location>
</feature>
<feature type="strand" evidence="19">
    <location>
        <begin position="924"/>
        <end position="927"/>
    </location>
</feature>
<feature type="strand" evidence="19">
    <location>
        <begin position="929"/>
        <end position="935"/>
    </location>
</feature>
<feature type="strand" evidence="19">
    <location>
        <begin position="944"/>
        <end position="947"/>
    </location>
</feature>
<feature type="strand" evidence="19">
    <location>
        <begin position="950"/>
        <end position="952"/>
    </location>
</feature>
<feature type="helix" evidence="19">
    <location>
        <begin position="959"/>
        <end position="961"/>
    </location>
</feature>
<feature type="strand" evidence="19">
    <location>
        <begin position="964"/>
        <end position="968"/>
    </location>
</feature>
<feature type="helix" evidence="19">
    <location>
        <begin position="973"/>
        <end position="978"/>
    </location>
</feature>
<feature type="strand" evidence="19">
    <location>
        <begin position="979"/>
        <end position="981"/>
    </location>
</feature>
<feature type="turn" evidence="19">
    <location>
        <begin position="983"/>
        <end position="985"/>
    </location>
</feature>
<feature type="strand" evidence="19">
    <location>
        <begin position="987"/>
        <end position="992"/>
    </location>
</feature>
<feature type="strand" evidence="19">
    <location>
        <begin position="1001"/>
        <end position="1009"/>
    </location>
</feature>
<feature type="strand" evidence="19">
    <location>
        <begin position="1012"/>
        <end position="1014"/>
    </location>
</feature>
<feature type="strand" evidence="19">
    <location>
        <begin position="1017"/>
        <end position="1026"/>
    </location>
</feature>
<feature type="helix" evidence="19">
    <location>
        <begin position="1029"/>
        <end position="1031"/>
    </location>
</feature>
<feature type="strand" evidence="19">
    <location>
        <begin position="1034"/>
        <end position="1036"/>
    </location>
</feature>
<feature type="strand" evidence="19">
    <location>
        <begin position="1038"/>
        <end position="1040"/>
    </location>
</feature>
<feature type="strand" evidence="19">
    <location>
        <begin position="1054"/>
        <end position="1057"/>
    </location>
</feature>
<feature type="strand" evidence="19">
    <location>
        <begin position="1067"/>
        <end position="1074"/>
    </location>
</feature>
<feature type="strand" evidence="19">
    <location>
        <begin position="1080"/>
        <end position="1082"/>
    </location>
</feature>
<feature type="turn" evidence="19">
    <location>
        <begin position="1084"/>
        <end position="1086"/>
    </location>
</feature>
<feature type="strand" evidence="19">
    <location>
        <begin position="1088"/>
        <end position="1091"/>
    </location>
</feature>
<feature type="turn" evidence="19">
    <location>
        <begin position="1097"/>
        <end position="1099"/>
    </location>
</feature>
<feature type="strand" evidence="19">
    <location>
        <begin position="1102"/>
        <end position="1111"/>
    </location>
</feature>
<feature type="helix" evidence="19">
    <location>
        <begin position="1112"/>
        <end position="1115"/>
    </location>
</feature>
<feature type="turn" evidence="19">
    <location>
        <begin position="1116"/>
        <end position="1118"/>
    </location>
</feature>
<feature type="strand" evidence="19">
    <location>
        <begin position="1127"/>
        <end position="1135"/>
    </location>
</feature>
<feature type="sequence variant" id="VAR_082801" description="In USH1F; dbSNP:rs11003863." evidence="13">
    <original>E</original>
    <variation>A</variation>
    <location sequence="Q96QU1-4">
        <position position="1611"/>
    </location>
</feature>
<name>PCD15_HUMAN</name>
<protein>
    <recommendedName>
        <fullName>Protocadherin-15</fullName>
    </recommendedName>
</protein>
<reference key="1">
    <citation type="journal article" date="2001" name="Hum. Mol. Genet.">
        <title>Mutations in the novel protocadherin PCDH15 cause Usher syndrome type 1F.</title>
        <authorList>
            <person name="Alagramam K.N."/>
            <person name="Yuan H."/>
            <person name="Kuehn M.H."/>
            <person name="Murcia C.L."/>
            <person name="Wayne S."/>
            <person name="Srisailpathy C.R.S."/>
            <person name="Lowry R.B."/>
            <person name="Knaus R."/>
            <person name="Van Laer L."/>
            <person name="Bernier F.P."/>
            <person name="Schwartz S."/>
            <person name="Lee C."/>
            <person name="Morton C.C."/>
            <person name="Mullins R.F."/>
            <person name="Ramesh A."/>
            <person name="Van Camp G."/>
            <person name="Hagemen G.S."/>
            <person name="Woychik R.P."/>
            <person name="Smith R.J.H."/>
        </authorList>
    </citation>
    <scope>NUCLEOTIDE SEQUENCE [MRNA] (ISOFORM 1)</scope>
    <scope>TISSUE SPECIFICITY</scope>
    <scope>INVOLVEMENT IN USHER SYNDROME TYPE 1F</scope>
    <scope>VARIANT GLN-929</scope>
    <source>
        <tissue>Fetal brain</tissue>
    </source>
</reference>
<reference key="2">
    <citation type="journal article" date="2001" name="Am. J. Hum. Genet.">
        <title>Mutations of the protocadherin gene PCDH15 cause Usher syndrome type 1F.</title>
        <authorList>
            <person name="Ahmed Z.M."/>
            <person name="Riazuddin S."/>
            <person name="Bernstein S.L."/>
            <person name="Ahmed Z."/>
            <person name="Khan S."/>
            <person name="Griffith A.J."/>
            <person name="Morell R.J."/>
            <person name="Friedman T.B."/>
            <person name="Riazuddin S."/>
            <person name="Wilcox E.R."/>
        </authorList>
    </citation>
    <scope>NUCLEOTIDE SEQUENCE [MRNA] (ISOFORM 1)</scope>
    <scope>INVOLVEMENT IN USHER SYNDROME TYPE 1F</scope>
</reference>
<reference key="3">
    <citation type="journal article" date="2003" name="Hum. Mol. Genet.">
        <title>PCDH15 is expressed in the neurosensory epithelium of the eye and ear and mutant alleles are responsible for both USH1F and DFNB23.</title>
        <authorList>
            <person name="Ahmed Z.M."/>
            <person name="Riazuddin S."/>
            <person name="Ahmad J."/>
            <person name="Bernstein S.L."/>
            <person name="Guo Y."/>
            <person name="Sabar M.F."/>
            <person name="Sieving P."/>
            <person name="Riazuddin S."/>
            <person name="Griffith A.J."/>
            <person name="Friedman T.B."/>
            <person name="Belyantseva I.A."/>
            <person name="Wilcox E.R."/>
        </authorList>
    </citation>
    <scope>NUCLEOTIDE SEQUENCE [MRNA] (ISOFORM 2)</scope>
    <scope>VARIANTS DFNB23 GLY-134 AND ASP-262</scope>
</reference>
<reference key="4">
    <citation type="journal article" date="2008" name="Hum. Genet.">
        <title>Gene structure and mutant alleles of PCDH15: nonsyndromic deafness DFNB23 and type 1 Usher syndrome.</title>
        <authorList>
            <person name="Ahmed Z.M."/>
            <person name="Riazuddin S."/>
            <person name="Aye S."/>
            <person name="Ali R.A."/>
            <person name="Venselaar H."/>
            <person name="Anwar S."/>
            <person name="Belyantseva P.P."/>
            <person name="Qasim M."/>
            <person name="Riazuddin S."/>
            <person name="Friedman T.B."/>
        </authorList>
    </citation>
    <scope>NUCLEOTIDE SEQUENCE [MRNA] (ISOFORMS 4 AND 5)</scope>
    <scope>TISSUE SPECIFICITY</scope>
    <scope>VARIANT DFNB23 GLY-134</scope>
    <scope>VARIANT USH1DF GLY-178</scope>
    <source>
        <tissue>Retina</tissue>
    </source>
</reference>
<reference key="5">
    <citation type="journal article" date="2007" name="BMC Genomics">
        <title>The full-ORF clone resource of the German cDNA consortium.</title>
        <authorList>
            <person name="Bechtel S."/>
            <person name="Rosenfelder H."/>
            <person name="Duda A."/>
            <person name="Schmidt C.P."/>
            <person name="Ernst U."/>
            <person name="Wellenreuther R."/>
            <person name="Mehrle A."/>
            <person name="Schuster C."/>
            <person name="Bahr A."/>
            <person name="Bloecker H."/>
            <person name="Heubner D."/>
            <person name="Hoerlein A."/>
            <person name="Michel G."/>
            <person name="Wedler H."/>
            <person name="Koehrer K."/>
            <person name="Ottenwaelder B."/>
            <person name="Poustka A."/>
            <person name="Wiemann S."/>
            <person name="Schupp I."/>
        </authorList>
    </citation>
    <scope>NUCLEOTIDE SEQUENCE [LARGE SCALE MRNA] (ISOFORM 3)</scope>
    <scope>VARIANTS ALA-435 AND GLN-929</scope>
    <source>
        <tissue>Lymph node</tissue>
    </source>
</reference>
<reference key="6">
    <citation type="journal article" date="2004" name="Nature">
        <title>The DNA sequence and comparative analysis of human chromosome 10.</title>
        <authorList>
            <person name="Deloukas P."/>
            <person name="Earthrowl M.E."/>
            <person name="Grafham D.V."/>
            <person name="Rubenfield M."/>
            <person name="French L."/>
            <person name="Steward C.A."/>
            <person name="Sims S.K."/>
            <person name="Jones M.C."/>
            <person name="Searle S."/>
            <person name="Scott C."/>
            <person name="Howe K."/>
            <person name="Hunt S.E."/>
            <person name="Andrews T.D."/>
            <person name="Gilbert J.G.R."/>
            <person name="Swarbreck D."/>
            <person name="Ashurst J.L."/>
            <person name="Taylor A."/>
            <person name="Battles J."/>
            <person name="Bird C.P."/>
            <person name="Ainscough R."/>
            <person name="Almeida J.P."/>
            <person name="Ashwell R.I.S."/>
            <person name="Ambrose K.D."/>
            <person name="Babbage A.K."/>
            <person name="Bagguley C.L."/>
            <person name="Bailey J."/>
            <person name="Banerjee R."/>
            <person name="Bates K."/>
            <person name="Beasley H."/>
            <person name="Bray-Allen S."/>
            <person name="Brown A.J."/>
            <person name="Brown J.Y."/>
            <person name="Burford D.C."/>
            <person name="Burrill W."/>
            <person name="Burton J."/>
            <person name="Cahill P."/>
            <person name="Camire D."/>
            <person name="Carter N.P."/>
            <person name="Chapman J.C."/>
            <person name="Clark S.Y."/>
            <person name="Clarke G."/>
            <person name="Clee C.M."/>
            <person name="Clegg S."/>
            <person name="Corby N."/>
            <person name="Coulson A."/>
            <person name="Dhami P."/>
            <person name="Dutta I."/>
            <person name="Dunn M."/>
            <person name="Faulkner L."/>
            <person name="Frankish A."/>
            <person name="Frankland J.A."/>
            <person name="Garner P."/>
            <person name="Garnett J."/>
            <person name="Gribble S."/>
            <person name="Griffiths C."/>
            <person name="Grocock R."/>
            <person name="Gustafson E."/>
            <person name="Hammond S."/>
            <person name="Harley J.L."/>
            <person name="Hart E."/>
            <person name="Heath P.D."/>
            <person name="Ho T.P."/>
            <person name="Hopkins B."/>
            <person name="Horne J."/>
            <person name="Howden P.J."/>
            <person name="Huckle E."/>
            <person name="Hynds C."/>
            <person name="Johnson C."/>
            <person name="Johnson D."/>
            <person name="Kana A."/>
            <person name="Kay M."/>
            <person name="Kimberley A.M."/>
            <person name="Kershaw J.K."/>
            <person name="Kokkinaki M."/>
            <person name="Laird G.K."/>
            <person name="Lawlor S."/>
            <person name="Lee H.M."/>
            <person name="Leongamornlert D.A."/>
            <person name="Laird G."/>
            <person name="Lloyd C."/>
            <person name="Lloyd D.M."/>
            <person name="Loveland J."/>
            <person name="Lovell J."/>
            <person name="McLaren S."/>
            <person name="McLay K.E."/>
            <person name="McMurray A."/>
            <person name="Mashreghi-Mohammadi M."/>
            <person name="Matthews L."/>
            <person name="Milne S."/>
            <person name="Nickerson T."/>
            <person name="Nguyen M."/>
            <person name="Overton-Larty E."/>
            <person name="Palmer S.A."/>
            <person name="Pearce A.V."/>
            <person name="Peck A.I."/>
            <person name="Pelan S."/>
            <person name="Phillimore B."/>
            <person name="Porter K."/>
            <person name="Rice C.M."/>
            <person name="Rogosin A."/>
            <person name="Ross M.T."/>
            <person name="Sarafidou T."/>
            <person name="Sehra H.K."/>
            <person name="Shownkeen R."/>
            <person name="Skuce C.D."/>
            <person name="Smith M."/>
            <person name="Standring L."/>
            <person name="Sycamore N."/>
            <person name="Tester J."/>
            <person name="Thorpe A."/>
            <person name="Torcasso W."/>
            <person name="Tracey A."/>
            <person name="Tromans A."/>
            <person name="Tsolas J."/>
            <person name="Wall M."/>
            <person name="Walsh J."/>
            <person name="Wang H."/>
            <person name="Weinstock K."/>
            <person name="West A.P."/>
            <person name="Willey D.L."/>
            <person name="Whitehead S.L."/>
            <person name="Wilming L."/>
            <person name="Wray P.W."/>
            <person name="Young L."/>
            <person name="Chen Y."/>
            <person name="Lovering R.C."/>
            <person name="Moschonas N.K."/>
            <person name="Siebert R."/>
            <person name="Fechtel K."/>
            <person name="Bentley D."/>
            <person name="Durbin R.M."/>
            <person name="Hubbard T."/>
            <person name="Doucette-Stamm L."/>
            <person name="Beck S."/>
            <person name="Smith D.R."/>
            <person name="Rogers J."/>
        </authorList>
    </citation>
    <scope>NUCLEOTIDE SEQUENCE [LARGE SCALE GENOMIC DNA]</scope>
</reference>
<reference key="7">
    <citation type="journal article" date="2006" name="Oncogene">
        <title>Protocadherin 15 (PCDH15): a new secreted isoform and a potential marker for NK/T cell lymphomas.</title>
        <authorList>
            <person name="Rouget-Quermalet V."/>
            <person name="Giustiniani J."/>
            <person name="Marie-Cardine A."/>
            <person name="Beaud G."/>
            <person name="Besnard F."/>
            <person name="Loyaux D."/>
            <person name="Ferrara P."/>
            <person name="Leroy K."/>
            <person name="Shimizu N."/>
            <person name="Gaulard P."/>
            <person name="Bensussan A."/>
            <person name="Schmitt C."/>
        </authorList>
    </citation>
    <scope>IDENTIFICATION OF ISOFORMS 1 AND 3</scope>
    <scope>SUBCELLULAR LOCATION</scope>
    <scope>TISSUE SPECIFICITY</scope>
    <scope>VARIANT ALA-19</scope>
</reference>
<reference key="8">
    <citation type="journal article" date="2005" name="Hum. Genet.">
        <title>Characterization of Usher syndrome type I gene mutations in an Usher syndrome patient population.</title>
        <authorList>
            <person name="Ouyang X.M."/>
            <person name="Yan D."/>
            <person name="Du L.L."/>
            <person name="Hejtmancik J.F."/>
            <person name="Jacobson S.G."/>
            <person name="Nance W.E."/>
            <person name="Li A.R."/>
            <person name="Angeli S."/>
            <person name="Kaiser M."/>
            <person name="Newton V."/>
            <person name="Brown S.D.M."/>
            <person name="Balkany T."/>
            <person name="Liu X.Z."/>
        </authorList>
    </citation>
    <scope>VARIANTS USH1F LYS-1342 AND THR-1867 DEL</scope>
</reference>
<reference key="9">
    <citation type="journal article" date="2005" name="Hum. Mol. Genet.">
        <title>Digenic inheritance of deafness caused by mutations in genes encoding cadherin 23 and protocadherin 15 in mice and humans.</title>
        <authorList>
            <person name="Zheng Q.Y."/>
            <person name="Yan D."/>
            <person name="Ouyang X.M."/>
            <person name="Du L.L."/>
            <person name="Yu H."/>
            <person name="Chang B."/>
            <person name="Johnson K.R."/>
            <person name="Liu X.Z."/>
        </authorList>
    </citation>
    <scope>INVOLVEMENT IN USH1DF</scope>
</reference>
<reference key="10">
    <citation type="journal article" date="2012" name="Mol. Vis.">
        <title>Mutation screening of the PCDH15 gene in Spanish patients with Usher syndrome type I.</title>
        <authorList>
            <person name="Jaijo T."/>
            <person name="Oshima A."/>
            <person name="Aller E."/>
            <person name="Carney C."/>
            <person name="Usami S."/>
            <person name="Millan J.M."/>
            <person name="Kimberling W.J."/>
        </authorList>
    </citation>
    <scope>VARIANTS USH1F GLN-134 AND ALA-1161 (ISOFORM 4)</scope>
    <scope>VARIANTS ALA-19; SER-174; SER-380; ALA-435; GLN-929 AND SER-1273</scope>
</reference>
<reference key="11">
    <citation type="journal article" date="2017" name="Genet. Test. Mol. Biomarkers">
        <title>Molecular Analysis of Twelve Pakistani Families with Nonsyndromic or Syndromic Hearing Loss.</title>
        <authorList>
            <person name="Wang R."/>
            <person name="Han S."/>
            <person name="Khan A."/>
            <person name="Zhang X."/>
        </authorList>
    </citation>
    <scope>VARIANT DFNB23 1576-GLN--LEU-1955 DEL</scope>
</reference>
<evidence type="ECO:0000250" key="1"/>
<evidence type="ECO:0000250" key="2">
    <source>
        <dbReference type="UniProtKB" id="Q99PJ1"/>
    </source>
</evidence>
<evidence type="ECO:0000255" key="3"/>
<evidence type="ECO:0000255" key="4">
    <source>
        <dbReference type="PROSITE-ProRule" id="PRU00043"/>
    </source>
</evidence>
<evidence type="ECO:0000256" key="5">
    <source>
        <dbReference type="SAM" id="MobiDB-lite"/>
    </source>
</evidence>
<evidence type="ECO:0000269" key="6">
    <source>
    </source>
</evidence>
<evidence type="ECO:0000269" key="7">
    <source>
    </source>
</evidence>
<evidence type="ECO:0000269" key="8">
    <source>
    </source>
</evidence>
<evidence type="ECO:0000269" key="9">
    <source>
    </source>
</evidence>
<evidence type="ECO:0000269" key="10">
    <source>
    </source>
</evidence>
<evidence type="ECO:0000269" key="11">
    <source>
    </source>
</evidence>
<evidence type="ECO:0000269" key="12">
    <source>
    </source>
</evidence>
<evidence type="ECO:0000269" key="13">
    <source>
    </source>
</evidence>
<evidence type="ECO:0000269" key="14">
    <source>
    </source>
</evidence>
<evidence type="ECO:0000303" key="15">
    <source>
    </source>
</evidence>
<evidence type="ECO:0000303" key="16">
    <source>
    </source>
</evidence>
<evidence type="ECO:0000303" key="17">
    <source>
    </source>
</evidence>
<evidence type="ECO:0000305" key="18"/>
<evidence type="ECO:0007829" key="19">
    <source>
        <dbReference type="PDB" id="4XHZ"/>
    </source>
</evidence>
<evidence type="ECO:0007829" key="20">
    <source>
        <dbReference type="PDB" id="5T4M"/>
    </source>
</evidence>
<evidence type="ECO:0007829" key="21">
    <source>
        <dbReference type="PDB" id="5ULY"/>
    </source>
</evidence>
<evidence type="ECO:0007829" key="22">
    <source>
        <dbReference type="PDB" id="6E8F"/>
    </source>
</evidence>
<evidence type="ECO:0007829" key="23">
    <source>
        <dbReference type="PDB" id="6EB5"/>
    </source>
</evidence>
<evidence type="ECO:0007829" key="24">
    <source>
        <dbReference type="PDB" id="6MFO"/>
    </source>
</evidence>
<evidence type="ECO:0007829" key="25">
    <source>
        <dbReference type="PDB" id="6N2E"/>
    </source>
</evidence>
<dbReference type="EMBL" id="AY029205">
    <property type="protein sequence ID" value="AAK31581.1"/>
    <property type="molecule type" value="mRNA"/>
</dbReference>
<dbReference type="EMBL" id="AY029237">
    <property type="protein sequence ID" value="AAK31804.1"/>
    <property type="molecule type" value="mRNA"/>
</dbReference>
<dbReference type="EMBL" id="AY388963">
    <property type="protein sequence ID" value="AAR26468.1"/>
    <property type="molecule type" value="mRNA"/>
</dbReference>
<dbReference type="EMBL" id="EU718480">
    <property type="protein sequence ID" value="ACF76476.1"/>
    <property type="molecule type" value="mRNA"/>
</dbReference>
<dbReference type="EMBL" id="EU718481">
    <property type="protein sequence ID" value="ACF76477.1"/>
    <property type="status" value="ALT_SEQ"/>
    <property type="molecule type" value="mRNA"/>
</dbReference>
<dbReference type="EMBL" id="EU718482">
    <property type="protein sequence ID" value="ACF76478.1"/>
    <property type="molecule type" value="mRNA"/>
</dbReference>
<dbReference type="EMBL" id="AL834134">
    <property type="protein sequence ID" value="CAD38850.2"/>
    <property type="status" value="ALT_TERM"/>
    <property type="molecule type" value="mRNA"/>
</dbReference>
<dbReference type="EMBL" id="AC013737">
    <property type="status" value="NOT_ANNOTATED_CDS"/>
    <property type="molecule type" value="Genomic_DNA"/>
</dbReference>
<dbReference type="EMBL" id="AC016817">
    <property type="status" value="NOT_ANNOTATED_CDS"/>
    <property type="molecule type" value="Genomic_DNA"/>
</dbReference>
<dbReference type="EMBL" id="AC024073">
    <property type="status" value="NOT_ANNOTATED_CDS"/>
    <property type="molecule type" value="Genomic_DNA"/>
</dbReference>
<dbReference type="EMBL" id="AC027671">
    <property type="status" value="NOT_ANNOTATED_CDS"/>
    <property type="molecule type" value="Genomic_DNA"/>
</dbReference>
<dbReference type="EMBL" id="AL353784">
    <property type="status" value="NOT_ANNOTATED_CDS"/>
    <property type="molecule type" value="Genomic_DNA"/>
</dbReference>
<dbReference type="EMBL" id="AL356114">
    <property type="status" value="NOT_ANNOTATED_CDS"/>
    <property type="molecule type" value="Genomic_DNA"/>
</dbReference>
<dbReference type="EMBL" id="AL360214">
    <property type="status" value="NOT_ANNOTATED_CDS"/>
    <property type="molecule type" value="Genomic_DNA"/>
</dbReference>
<dbReference type="EMBL" id="AL365496">
    <property type="status" value="NOT_ANNOTATED_CDS"/>
    <property type="molecule type" value="Genomic_DNA"/>
</dbReference>
<dbReference type="EMBL" id="AL391356">
    <property type="status" value="NOT_ANNOTATED_CDS"/>
    <property type="molecule type" value="Genomic_DNA"/>
</dbReference>
<dbReference type="EMBL" id="KF455239">
    <property type="status" value="NOT_ANNOTATED_CDS"/>
    <property type="molecule type" value="Genomic_DNA"/>
</dbReference>
<dbReference type="CCDS" id="CCDS7248.1">
    <molecule id="Q96QU1-1"/>
</dbReference>
<dbReference type="CCDS" id="CCDS86093.1">
    <molecule id="Q96QU1-3"/>
</dbReference>
<dbReference type="CCDS" id="CCDS86094.1">
    <molecule id="Q96QU1-6"/>
</dbReference>
<dbReference type="CCDS" id="CCDS86095.1">
    <molecule id="Q96QU1-4"/>
</dbReference>
<dbReference type="CCDS" id="CCDS91245.1">
    <molecule id="Q96QU1-7"/>
</dbReference>
<dbReference type="RefSeq" id="NP_001341340.1">
    <molecule id="Q96QU1-4"/>
    <property type="nucleotide sequence ID" value="NM_001354411.2"/>
</dbReference>
<dbReference type="RefSeq" id="NP_001341349.1">
    <molecule id="Q96QU1-6"/>
    <property type="nucleotide sequence ID" value="NM_001354420.2"/>
</dbReference>
<dbReference type="RefSeq" id="NP_001341359.1">
    <molecule id="Q96QU1-3"/>
    <property type="nucleotide sequence ID" value="NM_001354430.2"/>
</dbReference>
<dbReference type="RefSeq" id="NP_001371069.1">
    <molecule id="Q96QU1-7"/>
    <property type="nucleotide sequence ID" value="NM_001384140.1"/>
</dbReference>
<dbReference type="RefSeq" id="NP_149045.3">
    <molecule id="Q96QU1-1"/>
    <property type="nucleotide sequence ID" value="NM_033056.3"/>
</dbReference>
<dbReference type="RefSeq" id="XP_016872061.1">
    <property type="nucleotide sequence ID" value="XM_017016572.1"/>
</dbReference>
<dbReference type="PDB" id="4XHZ">
    <property type="method" value="X-ray"/>
    <property type="resolution" value="2.80 A"/>
    <property type="chains" value="A=816-1144"/>
</dbReference>
<dbReference type="PDB" id="5T4M">
    <property type="method" value="X-ray"/>
    <property type="resolution" value="2.24 A"/>
    <property type="chains" value="A/B=263-616"/>
</dbReference>
<dbReference type="PDB" id="5T4N">
    <property type="method" value="X-ray"/>
    <property type="resolution" value="2.70 A"/>
    <property type="chains" value="A/B=263-616"/>
</dbReference>
<dbReference type="PDB" id="5ULY">
    <property type="method" value="X-ray"/>
    <property type="resolution" value="2.64 A"/>
    <property type="chains" value="A/B/C/D=143-390"/>
</dbReference>
<dbReference type="PDB" id="6E8F">
    <property type="method" value="X-ray"/>
    <property type="resolution" value="2.99 A"/>
    <property type="chains" value="A/B/C=263-608"/>
</dbReference>
<dbReference type="PDB" id="6EB5">
    <property type="method" value="X-ray"/>
    <property type="resolution" value="2.60 A"/>
    <property type="chains" value="A/B=143-390"/>
</dbReference>
<dbReference type="PDB" id="6MFO">
    <property type="method" value="X-ray"/>
    <property type="resolution" value="3.15 A"/>
    <property type="chains" value="A=27-391"/>
</dbReference>
<dbReference type="PDB" id="6N2E">
    <property type="method" value="X-ray"/>
    <property type="resolution" value="2.90 A"/>
    <property type="chains" value="A/B=27-391"/>
</dbReference>
<dbReference type="PDBsum" id="4XHZ"/>
<dbReference type="PDBsum" id="5T4M"/>
<dbReference type="PDBsum" id="5T4N"/>
<dbReference type="PDBsum" id="5ULY"/>
<dbReference type="PDBsum" id="6E8F"/>
<dbReference type="PDBsum" id="6EB5"/>
<dbReference type="PDBsum" id="6MFO"/>
<dbReference type="PDBsum" id="6N2E"/>
<dbReference type="SMR" id="Q96QU1"/>
<dbReference type="BioGRID" id="122407">
    <property type="interactions" value="3"/>
</dbReference>
<dbReference type="FunCoup" id="Q96QU1">
    <property type="interactions" value="88"/>
</dbReference>
<dbReference type="IntAct" id="Q96QU1">
    <property type="interactions" value="1"/>
</dbReference>
<dbReference type="MINT" id="Q96QU1"/>
<dbReference type="STRING" id="9606.ENSP00000363068"/>
<dbReference type="ChEMBL" id="CHEMBL6112"/>
<dbReference type="GlyCosmos" id="Q96QU1">
    <property type="glycosylation" value="13 sites, No reported glycans"/>
</dbReference>
<dbReference type="GlyGen" id="Q96QU1">
    <property type="glycosylation" value="15 sites"/>
</dbReference>
<dbReference type="iPTMnet" id="Q96QU1"/>
<dbReference type="PhosphoSitePlus" id="Q96QU1"/>
<dbReference type="BioMuta" id="PCDH15"/>
<dbReference type="DMDM" id="116242702"/>
<dbReference type="jPOST" id="Q96QU1"/>
<dbReference type="MassIVE" id="Q96QU1"/>
<dbReference type="PaxDb" id="9606-ENSP00000363068"/>
<dbReference type="PeptideAtlas" id="Q96QU1"/>
<dbReference type="ProteomicsDB" id="77903">
    <molecule id="Q96QU1-1"/>
</dbReference>
<dbReference type="ProteomicsDB" id="77904">
    <molecule id="Q96QU1-2"/>
</dbReference>
<dbReference type="ProteomicsDB" id="77905">
    <molecule id="Q96QU1-3"/>
</dbReference>
<dbReference type="Antibodypedia" id="27955">
    <property type="antibodies" value="99 antibodies from 20 providers"/>
</dbReference>
<dbReference type="DNASU" id="65217"/>
<dbReference type="Ensembl" id="ENST00000320301.11">
    <molecule id="Q96QU1-1"/>
    <property type="protein sequence ID" value="ENSP00000322604.6"/>
    <property type="gene ID" value="ENSG00000150275.20"/>
</dbReference>
<dbReference type="Ensembl" id="ENST00000373955.5">
    <molecule id="Q96QU1-3"/>
    <property type="protein sequence ID" value="ENSP00000363066.1"/>
    <property type="gene ID" value="ENSG00000150275.20"/>
</dbReference>
<dbReference type="Ensembl" id="ENST00000395445.6">
    <molecule id="Q96QU1-4"/>
    <property type="protein sequence ID" value="ENSP00000378832.2"/>
    <property type="gene ID" value="ENSG00000150275.20"/>
</dbReference>
<dbReference type="Ensembl" id="ENST00000616114.4">
    <molecule id="Q96QU1-6"/>
    <property type="protein sequence ID" value="ENSP00000483745.1"/>
    <property type="gene ID" value="ENSG00000150275.20"/>
</dbReference>
<dbReference type="Ensembl" id="ENST00000644397.2">
    <molecule id="Q96QU1-7"/>
    <property type="protein sequence ID" value="ENSP00000495195.1"/>
    <property type="gene ID" value="ENSG00000150275.20"/>
</dbReference>
<dbReference type="GeneID" id="65217"/>
<dbReference type="KEGG" id="hsa:65217"/>
<dbReference type="MANE-Select" id="ENST00000644397.2">
    <molecule id="Q96QU1-7"/>
    <property type="protein sequence ID" value="ENSP00000495195.1"/>
    <property type="RefSeq nucleotide sequence ID" value="NM_001384140.1"/>
    <property type="RefSeq protein sequence ID" value="NP_001371069.1"/>
</dbReference>
<dbReference type="UCSC" id="uc001jju.2">
    <molecule id="Q96QU1-1"/>
    <property type="organism name" value="human"/>
</dbReference>
<dbReference type="AGR" id="HGNC:14674"/>
<dbReference type="CTD" id="65217"/>
<dbReference type="DisGeNET" id="65217"/>
<dbReference type="GeneCards" id="PCDH15"/>
<dbReference type="GeneReviews" id="PCDH15"/>
<dbReference type="HGNC" id="HGNC:14674">
    <property type="gene designation" value="PCDH15"/>
</dbReference>
<dbReference type="HPA" id="ENSG00000150275">
    <property type="expression patterns" value="Group enriched (adrenal gland, retina)"/>
</dbReference>
<dbReference type="MalaCards" id="PCDH15"/>
<dbReference type="MIM" id="276900">
    <property type="type" value="phenotype"/>
</dbReference>
<dbReference type="MIM" id="601067">
    <property type="type" value="phenotype"/>
</dbReference>
<dbReference type="MIM" id="602083">
    <property type="type" value="phenotype"/>
</dbReference>
<dbReference type="MIM" id="605514">
    <property type="type" value="gene"/>
</dbReference>
<dbReference type="MIM" id="609533">
    <property type="type" value="phenotype"/>
</dbReference>
<dbReference type="neXtProt" id="NX_Q96QU1"/>
<dbReference type="OpenTargets" id="ENSG00000150275"/>
<dbReference type="Orphanet" id="90636">
    <property type="disease" value="Rare autosomal recessive non-syndromic sensorineural deafness type DFNB"/>
</dbReference>
<dbReference type="Orphanet" id="231169">
    <property type="disease" value="Usher syndrome type 1"/>
</dbReference>
<dbReference type="PharmGKB" id="PA32999"/>
<dbReference type="VEuPathDB" id="HostDB:ENSG00000150275"/>
<dbReference type="eggNOG" id="KOG3594">
    <property type="taxonomic scope" value="Eukaryota"/>
</dbReference>
<dbReference type="GeneTree" id="ENSGT00940000156675"/>
<dbReference type="HOGENOM" id="CLU_286776_0_0_1"/>
<dbReference type="InParanoid" id="Q96QU1"/>
<dbReference type="OMA" id="NNMANAK"/>
<dbReference type="OrthoDB" id="10029135at2759"/>
<dbReference type="PAN-GO" id="Q96QU1">
    <property type="GO annotations" value="2 GO annotations based on evolutionary models"/>
</dbReference>
<dbReference type="PhylomeDB" id="Q96QU1"/>
<dbReference type="PathwayCommons" id="Q96QU1"/>
<dbReference type="Reactome" id="R-HSA-9662360">
    <property type="pathway name" value="Sensory processing of sound by inner hair cells of the cochlea"/>
</dbReference>
<dbReference type="Reactome" id="R-HSA-9662361">
    <property type="pathway name" value="Sensory processing of sound by outer hair cells of the cochlea"/>
</dbReference>
<dbReference type="SignaLink" id="Q96QU1"/>
<dbReference type="SIGNOR" id="Q96QU1"/>
<dbReference type="BioGRID-ORCS" id="65217">
    <property type="hits" value="10 hits in 1140 CRISPR screens"/>
</dbReference>
<dbReference type="ChiTaRS" id="PCDH15">
    <property type="organism name" value="human"/>
</dbReference>
<dbReference type="GeneWiki" id="PCDH15"/>
<dbReference type="GenomeRNAi" id="65217"/>
<dbReference type="Pharos" id="Q96QU1">
    <property type="development level" value="Tbio"/>
</dbReference>
<dbReference type="PRO" id="PR:Q96QU1"/>
<dbReference type="Proteomes" id="UP000005640">
    <property type="component" value="Chromosome 10"/>
</dbReference>
<dbReference type="RNAct" id="Q96QU1">
    <property type="molecule type" value="protein"/>
</dbReference>
<dbReference type="Bgee" id="ENSG00000150275">
    <property type="expression patterns" value="Expressed in left adrenal gland cortex and 95 other cell types or tissues"/>
</dbReference>
<dbReference type="ExpressionAtlas" id="Q96QU1">
    <property type="expression patterns" value="baseline and differential"/>
</dbReference>
<dbReference type="GO" id="GO:0005576">
    <property type="term" value="C:extracellular region"/>
    <property type="evidence" value="ECO:0007669"/>
    <property type="project" value="UniProtKB-SubCell"/>
</dbReference>
<dbReference type="GO" id="GO:0005615">
    <property type="term" value="C:extracellular space"/>
    <property type="evidence" value="ECO:0000314"/>
    <property type="project" value="HGNC-UCL"/>
</dbReference>
<dbReference type="GO" id="GO:0001750">
    <property type="term" value="C:photoreceptor outer segment"/>
    <property type="evidence" value="ECO:0000314"/>
    <property type="project" value="HGNC-UCL"/>
</dbReference>
<dbReference type="GO" id="GO:0005886">
    <property type="term" value="C:plasma membrane"/>
    <property type="evidence" value="ECO:0000318"/>
    <property type="project" value="GO_Central"/>
</dbReference>
<dbReference type="GO" id="GO:0032420">
    <property type="term" value="C:stereocilium"/>
    <property type="evidence" value="ECO:0000250"/>
    <property type="project" value="HGNC-UCL"/>
</dbReference>
<dbReference type="GO" id="GO:0045202">
    <property type="term" value="C:synapse"/>
    <property type="evidence" value="ECO:0000314"/>
    <property type="project" value="HGNC-UCL"/>
</dbReference>
<dbReference type="GO" id="GO:0005509">
    <property type="term" value="F:calcium ion binding"/>
    <property type="evidence" value="ECO:0007669"/>
    <property type="project" value="InterPro"/>
</dbReference>
<dbReference type="GO" id="GO:0007155">
    <property type="term" value="P:cell adhesion"/>
    <property type="evidence" value="ECO:0000318"/>
    <property type="project" value="GO_Central"/>
</dbReference>
<dbReference type="GO" id="GO:0050957">
    <property type="term" value="P:equilibrioception"/>
    <property type="evidence" value="ECO:0000315"/>
    <property type="project" value="HGNC-UCL"/>
</dbReference>
<dbReference type="GO" id="GO:0007156">
    <property type="term" value="P:homophilic cell adhesion via plasma membrane adhesion molecules"/>
    <property type="evidence" value="ECO:0007669"/>
    <property type="project" value="InterPro"/>
</dbReference>
<dbReference type="GO" id="GO:0048839">
    <property type="term" value="P:inner ear development"/>
    <property type="evidence" value="ECO:0007669"/>
    <property type="project" value="InterPro"/>
</dbReference>
<dbReference type="GO" id="GO:0045494">
    <property type="term" value="P:photoreceptor cell maintenance"/>
    <property type="evidence" value="ECO:0000315"/>
    <property type="project" value="HGNC-UCL"/>
</dbReference>
<dbReference type="GO" id="GO:0050953">
    <property type="term" value="P:sensory perception of light stimulus"/>
    <property type="evidence" value="ECO:0000315"/>
    <property type="project" value="HGNC-UCL"/>
</dbReference>
<dbReference type="GO" id="GO:0007605">
    <property type="term" value="P:sensory perception of sound"/>
    <property type="evidence" value="ECO:0000315"/>
    <property type="project" value="HGNC-UCL"/>
</dbReference>
<dbReference type="CDD" id="cd11304">
    <property type="entry name" value="Cadherin_repeat"/>
    <property type="match status" value="9"/>
</dbReference>
<dbReference type="FunFam" id="2.60.40.3430:FF:000001">
    <property type="entry name" value="protocadherin-15 isoform X1"/>
    <property type="match status" value="1"/>
</dbReference>
<dbReference type="FunFam" id="2.60.40.60:FF:000047">
    <property type="entry name" value="protocadherin-15 isoform X1"/>
    <property type="match status" value="1"/>
</dbReference>
<dbReference type="FunFam" id="2.60.40.60:FF:000048">
    <property type="entry name" value="protocadherin-15 isoform X1"/>
    <property type="match status" value="1"/>
</dbReference>
<dbReference type="FunFam" id="2.60.40.60:FF:000049">
    <property type="entry name" value="protocadherin-15 isoform X1"/>
    <property type="match status" value="1"/>
</dbReference>
<dbReference type="FunFam" id="2.60.40.60:FF:000050">
    <property type="entry name" value="protocadherin-15 isoform X1"/>
    <property type="match status" value="1"/>
</dbReference>
<dbReference type="FunFam" id="2.60.40.60:FF:000054">
    <property type="entry name" value="protocadherin-15 isoform X1"/>
    <property type="match status" value="1"/>
</dbReference>
<dbReference type="FunFam" id="2.60.40.60:FF:000055">
    <property type="entry name" value="protocadherin-15 isoform X1"/>
    <property type="match status" value="1"/>
</dbReference>
<dbReference type="FunFam" id="2.60.40.60:FF:000056">
    <property type="entry name" value="protocadherin-15 isoform X1"/>
    <property type="match status" value="1"/>
</dbReference>
<dbReference type="FunFam" id="2.60.40.60:FF:000057">
    <property type="entry name" value="protocadherin-15 isoform X1"/>
    <property type="match status" value="1"/>
</dbReference>
<dbReference type="FunFam" id="2.60.40.60:FF:000063">
    <property type="entry name" value="protocadherin-15 isoform X1"/>
    <property type="match status" value="1"/>
</dbReference>
<dbReference type="FunFam" id="2.60.40.60:FF:000070">
    <property type="entry name" value="protocadherin-15 isoform X1"/>
    <property type="match status" value="1"/>
</dbReference>
<dbReference type="Gene3D" id="2.60.40.3430">
    <property type="match status" value="1"/>
</dbReference>
<dbReference type="Gene3D" id="2.60.40.60">
    <property type="entry name" value="Cadherins"/>
    <property type="match status" value="10"/>
</dbReference>
<dbReference type="InterPro" id="IPR050971">
    <property type="entry name" value="Cadherin-domain_protein"/>
</dbReference>
<dbReference type="InterPro" id="IPR002126">
    <property type="entry name" value="Cadherin-like_dom"/>
</dbReference>
<dbReference type="InterPro" id="IPR015919">
    <property type="entry name" value="Cadherin-like_sf"/>
</dbReference>
<dbReference type="InterPro" id="IPR020894">
    <property type="entry name" value="Cadherin_CS"/>
</dbReference>
<dbReference type="InterPro" id="IPR041149">
    <property type="entry name" value="EC_dom"/>
</dbReference>
<dbReference type="InterPro" id="IPR030718">
    <property type="entry name" value="EC_dom_sf"/>
</dbReference>
<dbReference type="InterPro" id="IPR056989">
    <property type="entry name" value="PCDH15_12th_dom"/>
</dbReference>
<dbReference type="PANTHER" id="PTHR24025">
    <property type="entry name" value="DESMOGLEIN FAMILY MEMBER"/>
    <property type="match status" value="1"/>
</dbReference>
<dbReference type="PANTHER" id="PTHR24025:SF31">
    <property type="entry name" value="NEURAL-CADHERIN"/>
    <property type="match status" value="1"/>
</dbReference>
<dbReference type="Pfam" id="PF00028">
    <property type="entry name" value="Cadherin"/>
    <property type="match status" value="8"/>
</dbReference>
<dbReference type="Pfam" id="PF18432">
    <property type="entry name" value="ECD"/>
    <property type="match status" value="1"/>
</dbReference>
<dbReference type="Pfam" id="PF23206">
    <property type="entry name" value="PCDH15_12th"/>
    <property type="match status" value="1"/>
</dbReference>
<dbReference type="PRINTS" id="PR00205">
    <property type="entry name" value="CADHERIN"/>
</dbReference>
<dbReference type="PRINTS" id="PR01217">
    <property type="entry name" value="PRICHEXTENSN"/>
</dbReference>
<dbReference type="SMART" id="SM00112">
    <property type="entry name" value="CA"/>
    <property type="match status" value="11"/>
</dbReference>
<dbReference type="SUPFAM" id="SSF49313">
    <property type="entry name" value="Cadherin-like"/>
    <property type="match status" value="10"/>
</dbReference>
<dbReference type="PROSITE" id="PS00232">
    <property type="entry name" value="CADHERIN_1"/>
    <property type="match status" value="3"/>
</dbReference>
<dbReference type="PROSITE" id="PS50268">
    <property type="entry name" value="CADHERIN_2"/>
    <property type="match status" value="10"/>
</dbReference>
<keyword id="KW-0002">3D-structure</keyword>
<keyword id="KW-0025">Alternative splicing</keyword>
<keyword id="KW-0106">Calcium</keyword>
<keyword id="KW-0130">Cell adhesion</keyword>
<keyword id="KW-1003">Cell membrane</keyword>
<keyword id="KW-0209">Deafness</keyword>
<keyword id="KW-0225">Disease variant</keyword>
<keyword id="KW-1015">Disulfide bond</keyword>
<keyword id="KW-0325">Glycoprotein</keyword>
<keyword id="KW-1009">Hearing</keyword>
<keyword id="KW-0472">Membrane</keyword>
<keyword id="KW-1010">Non-syndromic deafness</keyword>
<keyword id="KW-1267">Proteomics identification</keyword>
<keyword id="KW-1185">Reference proteome</keyword>
<keyword id="KW-0677">Repeat</keyword>
<keyword id="KW-0682">Retinitis pigmentosa</keyword>
<keyword id="KW-0964">Secreted</keyword>
<keyword id="KW-0732">Signal</keyword>
<keyword id="KW-0812">Transmembrane</keyword>
<keyword id="KW-1133">Transmembrane helix</keyword>
<keyword id="KW-0836">Usher syndrome</keyword>
<accession>Q96QU1</accession>
<accession>A0A2R8Y6C0</accession>
<accession>A6NL19</accession>
<accession>C6ZEF5</accession>
<accession>C6ZEF6</accession>
<accession>C6ZEF7</accession>
<accession>Q5VY38</accession>
<accession>Q5VY39</accession>
<accession>Q6TRH8</accession>
<accession>Q8NDB9</accession>
<accession>Q96QT8</accession>
<sequence length="1955" mass="216069">MFRQFYLWTCLASGIILGSLFEICLGQYDDDCKLARGGPPATIVAIDEESRNGTILVDNMLIKGTAGGPDPTIELSLKDNVDYWVLMDPVKQMLFLNSTGRVLDRDPPMNIHSIVVQVQCINKKVGTIIYHEVRIVVRDRNDNSPTFKHESYYATVNELTPVGTTIFTGFSGDNGATDIDDGPNGQIEYVIQYNPDDPTSNDTFEIPLMLTGNIVLRKRLNYEDKTRYFVIIQANDRAQNLNERRTTTTTLTVDVLDGDDLGPMFLPCVLVPNTRDCRPLTYQAAIPELRTPEELNPIIVTPPIQAIDQDRNIQPPSDRPGILYSILVGTPEDYPRFFHMHPRTAELSLLEPVNRDFHQKFDLVIKAEQDNGHPLPAFAGLHIEILDENNQSPYFTMPSYQGYILESAPVGATISDSLNLTSPLRIVALDKDIEDTKDPELHLFLNDYTSVFTVTQTGITRYLTLLQPVDREEQQTYTFSITAFDGVQESEPVIVNIQVMDANDNTPTFPEISYDVYVYTDMRPGDSVIQLTAVDADEGSNGEITYEILVGAQGDFIINKTTGLITIAPGVEMIVGRTYALTVQAADNAPPAERRNSICTVYIEVLPPNNQSPPRFPQLMYSLEISEAMRVGAVLLNLQATDREGDSITYAIENGDPQRVFNLSETTGILTLGKALDRESTDRYILIITASDGRPDGTSTATVNIVVTDVNDNAPVFDPYLPRNLSVVEEEANAFVGQVKATDPDAGINGQVHYSLGNFNNLFRITSNGSIYTAVKLNREVRDYYELVVVATDGAVHPRHSTLTLAIKVLDIDDNSPVFTNSTYTVLVEENLPAGTTILQIEAKDVDLGANVSYRIRSPEVKHFFALHPFTGELSLLRSLDYEAFPDQEASITFLVEAFDIYGTMPPGIATVTVIVKDMNDYPPVFSKRIYKGMVAPDAVKGTPITTVYAEDADPPGLPASRVRYRVDDVQFPYPASIFEVEEDSGRVITRVNLNEEPTTIFKLVVVAFDDGEPVMSSSATVKILVLHPGEIPRFTQEEYRPPPVSELATKGTMVGVISAAAINQSIVYSIVSGNEEDTFGINNITGVIYVNGPLDYETRTSYVLRVQADSLEVVLANLRVPSKSNTAKVYIEIQDENNHPPVFQKKFYIGGVSEDARMFTSVLRVKATDKDTGNYSVMAYRLIIPPIKEGKEGFVVETYTGLIKTAMLFHNMRRSYFKFQVIATDDYGKGLSGKADVLVSVVNQLDMQVIVSNVPPTLVEKKIEDLTEILDRYVQEQIPGAKVVVESIGARRHGDAFSLEDYTKCDLTVYAIDPQTNRAIDRNELFKFLDGKLLDINKDFQPYYGEGGRILEIRTPEAVTSIKKRGESLGYTEGALLALAFIIILCCIPAILVVLVSYRQFKVRQAECTKTARIQAALPAAKPAVPAPAPVAAPPPPPPPPPGAHLYEELGDSSILFLLYHFQQSRGNNSVSEDRKHQQVVMPFSSNTIEAHKSAHVDGSLKSNKLKSARKFTFLSDEDDLSAHNPLYKENISQVSTNSDISQRTDFVDPFSPKIQAKSKSLRGPREKIQRLWSQSVSLPRRLMRKVPNRPEIIDLQQWQGTRQKAENENTGICTNKRGSSNPLLTTEEANLTEKEEIRQGETLMIEGTEQLKSLSSDSSFCFPRPHFSFSTLPTVSRTVELKSEPNVISSPAECSLELSPSRPCVLHSSLSRRETPICMLPIETERNIFENFAHPPNISPSACPLPPPPPISPPSPPPAPAPLAPPPDISPFSLFCPPPSPPSIPLPLPPPTFFPLSVSTSGPPTPPLLPPFPTPLPPPPPSIPCPPPPSASFLSTECVCITGVKCTTNLMPAEKIKSSMTQLSTTTVCKTDPQREPKGILRHVKNLAELEKSVANMYSQIEKNYLRTNVSELQTMCPSEVTNMEITSEQNKGSLNNIVEGTEKQSHSQSTSL</sequence>
<organism>
    <name type="scientific">Homo sapiens</name>
    <name type="common">Human</name>
    <dbReference type="NCBI Taxonomy" id="9606"/>
    <lineage>
        <taxon>Eukaryota</taxon>
        <taxon>Metazoa</taxon>
        <taxon>Chordata</taxon>
        <taxon>Craniata</taxon>
        <taxon>Vertebrata</taxon>
        <taxon>Euteleostomi</taxon>
        <taxon>Mammalia</taxon>
        <taxon>Eutheria</taxon>
        <taxon>Euarchontoglires</taxon>
        <taxon>Primates</taxon>
        <taxon>Haplorrhini</taxon>
        <taxon>Catarrhini</taxon>
        <taxon>Hominidae</taxon>
        <taxon>Homo</taxon>
    </lineage>
</organism>
<gene>
    <name type="primary">PCDH15</name>
    <name type="synonym">USH1F</name>
</gene>
<comment type="function">
    <text>Calcium-dependent cell-adhesion protein. Essential for maintenance of normal retinal and cochlear function.</text>
</comment>
<comment type="subunit">
    <text evidence="2">Antiparallel heterodimer with CDH23. Found in a complex with TMIE and LHFPL5. Interacts with LHFPL5/TMHS; this interaction is required for efficient localization to hair bundles. Interacts with MYO7A. Interacts with USH1G; this interaction may recruit USH1G to the plasma membrane. Interacts with TOMT. Isoforms CD1 and CD3 interact with TMC1 (via N-terminus) and TMC2 (via N-terminus).</text>
</comment>
<comment type="subcellular location">
    <subcellularLocation>
        <location evidence="1">Cell membrane</location>
        <topology evidence="1">Single-pass type I membrane protein</topology>
    </subcellularLocation>
    <text evidence="1">Efficient localization to the plasma membrane requires the presence of LHFPL5.</text>
</comment>
<comment type="subcellular location">
    <molecule>Isoform 3</molecule>
    <subcellularLocation>
        <location>Secreted</location>
    </subcellularLocation>
</comment>
<comment type="alternative products">
    <event type="alternative splicing"/>
    <isoform>
        <id>Q96QU1-1</id>
        <name>1</name>
        <name>A</name>
        <name>CD1-1</name>
        <sequence type="displayed"/>
    </isoform>
    <isoform>
        <id>Q96QU1-2</id>
        <name>2</name>
        <name>B</name>
        <sequence type="described" ref="VSP_028257 VSP_028258"/>
    </isoform>
    <isoform>
        <id>Q96QU1-3</id>
        <name>3</name>
        <name>C</name>
        <sequence type="described" ref="VSP_028259 VSP_028260"/>
    </isoform>
    <isoform>
        <id>Q96QU1-4</id>
        <name>4</name>
        <name>CD2-1</name>
        <sequence type="described" ref="VSP_046616 VSP_046617 VSP_046622"/>
    </isoform>
    <isoform>
        <id>Q96QU1-6</id>
        <name>5</name>
        <name>CD3-1</name>
        <sequence type="described" ref="VSP_046618 VSP_046621"/>
    </isoform>
    <isoform>
        <id>Q96QU1-7</id>
        <name>7</name>
        <sequence type="described" ref="VSP_062482 VSP_062483"/>
    </isoform>
</comment>
<comment type="tissue specificity">
    <text evidence="6 10 12">Expressed in brain, lung, kidney, spleen and testis. Found also in the inner and outer synaptic layers, and the nerve fiber layer in adult and fetal retinas. Found in the supporting cells, outer sulcus cells and spiral ganglion of fetal cochlea. Expressed in cytotoxic tumor-derived T- and NK-cell lines as well as biopsies of nasal NK/T-cell lymphomas. Not detected in normal or in vitro activated peripheral blood cells, CD4 or CD8 lymphocytes or NK cells. Isoform 3 is expressed in brain, heart, cerebellum and kidney. CD1 isoforms, such as isoform 1, have a limited pattern of expression and is detected in testis, retina and cochlea. CD2 isoforms, such as isoforms 4 and 5, are expressed in heart, kidney, thymus, spleen, testis, retina and cochlea. CD3 isoforms, such as isoform 6, are widely expressed.</text>
</comment>
<comment type="domain">
    <text evidence="1">Cadherin repeats 1 and 2 mediate calcium-dependent heterophilic interaction with CDH23.</text>
</comment>
<comment type="domain">
    <text evidence="1">Three calcium ions are usually bound at the interface of each cadherin domain and rigidify the connections, imparting a strong curvature to the full-length ectodomain.</text>
</comment>
<comment type="disease" evidence="9 13">
    <disease id="DI-01116">
        <name>Usher syndrome 1F</name>
        <acronym>USH1F</acronym>
        <description>USH is a genetically heterogeneous condition characterized by the association of retinitis pigmentosa with sensorineural deafness. Age at onset and differences in auditory and vestibular function distinguish Usher syndrome type 1 (USH1), Usher syndrome type 2 (USH2) and Usher syndrome type 3 (USH3). USH1 is characterized by profound congenital sensorineural deafness, absent vestibular function and prepubertal onset of progressive retinitis pigmentosa leading to blindness.</description>
        <dbReference type="MIM" id="602083"/>
    </disease>
    <text>The disease is caused by variants affecting the gene represented in this entry.</text>
</comment>
<comment type="disease" evidence="8 12">
    <disease id="DI-01115">
        <name>Usher syndrome 1D/F</name>
        <acronym>USH1DF</acronym>
        <description>A digenic recessive form of Usher syndrome, a genetically heterogeneous condition characterized by the association of retinitis pigmentosa with sensorineural deafness. Age at onset and differences in auditory and vestibular function distinguish Usher syndrome type 1 (USH1), Usher syndrome type 2 (USH2) and Usher syndrome type 3 (USH3). USH1 is characterized by profound congenital sensorineural deafness, absent vestibular function and prepubertal onset of progressive retinitis pigmentosa leading to blindness.</description>
        <dbReference type="MIM" id="601067"/>
    </disease>
    <text>The disease is caused by variants affecting distinct genetic loci, including the gene represented in this entry.</text>
</comment>
<comment type="disease" evidence="7 12 14">
    <disease id="DI-00867">
        <name>Deafness, autosomal recessive, 23</name>
        <acronym>DFNB23</acronym>
        <description>A form of non-syndromic sensorineural hearing loss. Sensorineural deafness results from damage to the neural receptors of the inner ear, the nerve pathways to the brain, or the area of the brain that receives sound information.</description>
        <dbReference type="MIM" id="609533"/>
    </disease>
    <text>The disease is caused by variants affecting the gene represented in this entry.</text>
</comment>
<comment type="sequence caution" evidence="18">
    <conflict type="miscellaneous discrepancy">
        <sequence resource="EMBL-CDS" id="ACF76477"/>
    </conflict>
    <text>Unlikely isoform. Probable cloning artifact.</text>
</comment>
<comment type="sequence caution" evidence="18">
    <molecule>Isoform 3</molecule>
    <conflict type="erroneous termination">
        <sequence resource="EMBL-CDS" id="CAD38850"/>
    </conflict>
    <text>Truncated C-terminus.</text>
</comment>